<protein>
    <recommendedName>
        <fullName evidence="1">Probable Brix domain-containing ribosomal biogenesis protein</fullName>
    </recommendedName>
</protein>
<dbReference type="EMBL" id="AE000666">
    <property type="protein sequence ID" value="AAB85185.1"/>
    <property type="molecule type" value="Genomic_DNA"/>
</dbReference>
<dbReference type="PIR" id="F69190">
    <property type="entry name" value="F69190"/>
</dbReference>
<dbReference type="RefSeq" id="WP_010876318.1">
    <property type="nucleotide sequence ID" value="NC_000916.1"/>
</dbReference>
<dbReference type="PDB" id="1W94">
    <property type="method" value="X-ray"/>
    <property type="resolution" value="2.00 A"/>
    <property type="chains" value="A/B=1-155"/>
</dbReference>
<dbReference type="PDBsum" id="1W94"/>
<dbReference type="SMR" id="O26776"/>
<dbReference type="STRING" id="187420.MTH_680"/>
<dbReference type="PaxDb" id="187420-MTH_680"/>
<dbReference type="EnsemblBacteria" id="AAB85185">
    <property type="protein sequence ID" value="AAB85185"/>
    <property type="gene ID" value="MTH_680"/>
</dbReference>
<dbReference type="KEGG" id="mth:MTH_680"/>
<dbReference type="HOGENOM" id="CLU_107897_1_0_2"/>
<dbReference type="InParanoid" id="O26776"/>
<dbReference type="EvolutionaryTrace" id="O26776"/>
<dbReference type="Proteomes" id="UP000005223">
    <property type="component" value="Chromosome"/>
</dbReference>
<dbReference type="GO" id="GO:0019843">
    <property type="term" value="F:rRNA binding"/>
    <property type="evidence" value="ECO:0007669"/>
    <property type="project" value="InterPro"/>
</dbReference>
<dbReference type="GO" id="GO:0006364">
    <property type="term" value="P:rRNA processing"/>
    <property type="evidence" value="ECO:0007669"/>
    <property type="project" value="InterPro"/>
</dbReference>
<dbReference type="Gene3D" id="3.40.50.10480">
    <property type="entry name" value="Probable brix-domain ribosomal biogenesis protein"/>
    <property type="match status" value="1"/>
</dbReference>
<dbReference type="HAMAP" id="MF_00699">
    <property type="entry name" value="BriX"/>
    <property type="match status" value="1"/>
</dbReference>
<dbReference type="InterPro" id="IPR007109">
    <property type="entry name" value="Brix"/>
</dbReference>
<dbReference type="InterPro" id="IPR023548">
    <property type="entry name" value="Brix_dom_Rbsml_bgen_prot"/>
</dbReference>
<dbReference type="SMART" id="SM00879">
    <property type="entry name" value="Brix"/>
    <property type="match status" value="1"/>
</dbReference>
<dbReference type="SUPFAM" id="SSF52954">
    <property type="entry name" value="Class II aaRS ABD-related"/>
    <property type="match status" value="1"/>
</dbReference>
<dbReference type="PROSITE" id="PS50833">
    <property type="entry name" value="BRIX"/>
    <property type="match status" value="1"/>
</dbReference>
<name>BRIX_METTH</name>
<accession>O26776</accession>
<evidence type="ECO:0000255" key="1">
    <source>
        <dbReference type="HAMAP-Rule" id="MF_00699"/>
    </source>
</evidence>
<evidence type="ECO:0007829" key="2">
    <source>
        <dbReference type="PDB" id="1W94"/>
    </source>
</evidence>
<feature type="chain" id="PRO_0000120274" description="Probable Brix domain-containing ribosomal biogenesis protein">
    <location>
        <begin position="1"/>
        <end position="155"/>
    </location>
</feature>
<feature type="domain" description="Brix" evidence="1">
    <location>
        <begin position="1"/>
        <end position="155"/>
    </location>
</feature>
<feature type="strand" evidence="2">
    <location>
        <begin position="2"/>
        <end position="5"/>
    </location>
</feature>
<feature type="helix" evidence="2">
    <location>
        <begin position="11"/>
        <end position="24"/>
    </location>
</feature>
<feature type="helix" evidence="2">
    <location>
        <begin position="36"/>
        <end position="43"/>
    </location>
</feature>
<feature type="strand" evidence="2">
    <location>
        <begin position="47"/>
        <end position="53"/>
    </location>
</feature>
<feature type="strand" evidence="2">
    <location>
        <begin position="56"/>
        <end position="63"/>
    </location>
</feature>
<feature type="strand" evidence="2">
    <location>
        <begin position="69"/>
        <end position="79"/>
    </location>
</feature>
<feature type="strand" evidence="2">
    <location>
        <begin position="92"/>
        <end position="94"/>
    </location>
</feature>
<feature type="helix" evidence="2">
    <location>
        <begin position="101"/>
        <end position="107"/>
    </location>
</feature>
<feature type="strand" evidence="2">
    <location>
        <begin position="119"/>
        <end position="123"/>
    </location>
</feature>
<feature type="strand" evidence="2">
    <location>
        <begin position="126"/>
        <end position="135"/>
    </location>
</feature>
<feature type="strand" evidence="2">
    <location>
        <begin position="139"/>
        <end position="153"/>
    </location>
</feature>
<keyword id="KW-0002">3D-structure</keyword>
<keyword id="KW-1185">Reference proteome</keyword>
<keyword id="KW-0690">Ribosome biogenesis</keyword>
<sequence>MLLTTSRKPSQRTRSFSQRLSRIMGWRYINRGKMSLRDVLIEARGPVAVVSERHGNPARITFLDERGGERGYILFNPSFEMKKPELADKAVRVSSCPPGSEGLCNLMGLEVDESSSRDAWSIRTDEEYAWVMELMDARGTPAGFKLLIRDFRVGE</sequence>
<organism>
    <name type="scientific">Methanothermobacter thermautotrophicus (strain ATCC 29096 / DSM 1053 / JCM 10044 / NBRC 100330 / Delta H)</name>
    <name type="common">Methanobacterium thermoautotrophicum</name>
    <dbReference type="NCBI Taxonomy" id="187420"/>
    <lineage>
        <taxon>Archaea</taxon>
        <taxon>Methanobacteriati</taxon>
        <taxon>Methanobacteriota</taxon>
        <taxon>Methanomada group</taxon>
        <taxon>Methanobacteria</taxon>
        <taxon>Methanobacteriales</taxon>
        <taxon>Methanobacteriaceae</taxon>
        <taxon>Methanothermobacter</taxon>
    </lineage>
</organism>
<reference key="1">
    <citation type="journal article" date="1997" name="J. Bacteriol.">
        <title>Complete genome sequence of Methanobacterium thermoautotrophicum deltaH: functional analysis and comparative genomics.</title>
        <authorList>
            <person name="Smith D.R."/>
            <person name="Doucette-Stamm L.A."/>
            <person name="Deloughery C."/>
            <person name="Lee H.-M."/>
            <person name="Dubois J."/>
            <person name="Aldredge T."/>
            <person name="Bashirzadeh R."/>
            <person name="Blakely D."/>
            <person name="Cook R."/>
            <person name="Gilbert K."/>
            <person name="Harrison D."/>
            <person name="Hoang L."/>
            <person name="Keagle P."/>
            <person name="Lumm W."/>
            <person name="Pothier B."/>
            <person name="Qiu D."/>
            <person name="Spadafora R."/>
            <person name="Vicare R."/>
            <person name="Wang Y."/>
            <person name="Wierzbowski J."/>
            <person name="Gibson R."/>
            <person name="Jiwani N."/>
            <person name="Caruso A."/>
            <person name="Bush D."/>
            <person name="Safer H."/>
            <person name="Patwell D."/>
            <person name="Prabhakar S."/>
            <person name="McDougall S."/>
            <person name="Shimer G."/>
            <person name="Goyal A."/>
            <person name="Pietrovski S."/>
            <person name="Church G.M."/>
            <person name="Daniels C.J."/>
            <person name="Mao J.-I."/>
            <person name="Rice P."/>
            <person name="Noelling J."/>
            <person name="Reeve J.N."/>
        </authorList>
    </citation>
    <scope>NUCLEOTIDE SEQUENCE [LARGE SCALE GENOMIC DNA]</scope>
    <source>
        <strain>ATCC 29096 / DSM 1053 / JCM 10044 / NBRC 100330 / Delta H</strain>
    </source>
</reference>
<gene>
    <name type="ordered locus">MTH_680</name>
</gene>
<proteinExistence type="evidence at protein level"/>
<comment type="function">
    <text evidence="1">Probably involved in the biogenesis of the ribosome.</text>
</comment>